<protein>
    <recommendedName>
        <fullName evidence="1">Co-chaperonin GroES</fullName>
    </recommendedName>
    <alternativeName>
        <fullName evidence="1">10 kDa chaperonin</fullName>
    </alternativeName>
    <alternativeName>
        <fullName evidence="1">Chaperonin-10</fullName>
        <shortName evidence="1">Cpn10</shortName>
    </alternativeName>
</protein>
<feature type="chain" id="PRO_1000025344" description="Co-chaperonin GroES">
    <location>
        <begin position="1"/>
        <end position="96"/>
    </location>
</feature>
<reference key="1">
    <citation type="journal article" date="2006" name="Nat. Biotechnol.">
        <title>Genome sequence of the bioplastic-producing 'Knallgas' bacterium Ralstonia eutropha H16.</title>
        <authorList>
            <person name="Pohlmann A."/>
            <person name="Fricke W.F."/>
            <person name="Reinecke F."/>
            <person name="Kusian B."/>
            <person name="Liesegang H."/>
            <person name="Cramm R."/>
            <person name="Eitinger T."/>
            <person name="Ewering C."/>
            <person name="Poetter M."/>
            <person name="Schwartz E."/>
            <person name="Strittmatter A."/>
            <person name="Voss I."/>
            <person name="Gottschalk G."/>
            <person name="Steinbuechel A."/>
            <person name="Friedrich B."/>
            <person name="Bowien B."/>
        </authorList>
    </citation>
    <scope>NUCLEOTIDE SEQUENCE [LARGE SCALE GENOMIC DNA]</scope>
    <source>
        <strain>ATCC 17699 / DSM 428 / KCTC 22496 / NCIMB 10442 / H16 / Stanier 337</strain>
    </source>
</reference>
<dbReference type="EMBL" id="AM260479">
    <property type="protein sequence ID" value="CAJ91853.1"/>
    <property type="molecule type" value="Genomic_DNA"/>
</dbReference>
<dbReference type="RefSeq" id="WP_010813047.1">
    <property type="nucleotide sequence ID" value="NZ_CP039287.1"/>
</dbReference>
<dbReference type="SMR" id="Q0KDR8"/>
<dbReference type="STRING" id="381666.H16_A0705"/>
<dbReference type="GeneID" id="34308637"/>
<dbReference type="KEGG" id="reh:H16_A0705"/>
<dbReference type="eggNOG" id="COG0234">
    <property type="taxonomic scope" value="Bacteria"/>
</dbReference>
<dbReference type="HOGENOM" id="CLU_132825_1_0_4"/>
<dbReference type="OrthoDB" id="9806791at2"/>
<dbReference type="Proteomes" id="UP000008210">
    <property type="component" value="Chromosome 1"/>
</dbReference>
<dbReference type="GO" id="GO:0005737">
    <property type="term" value="C:cytoplasm"/>
    <property type="evidence" value="ECO:0007669"/>
    <property type="project" value="UniProtKB-SubCell"/>
</dbReference>
<dbReference type="GO" id="GO:0005524">
    <property type="term" value="F:ATP binding"/>
    <property type="evidence" value="ECO:0007669"/>
    <property type="project" value="InterPro"/>
</dbReference>
<dbReference type="GO" id="GO:0046872">
    <property type="term" value="F:metal ion binding"/>
    <property type="evidence" value="ECO:0007669"/>
    <property type="project" value="TreeGrafter"/>
</dbReference>
<dbReference type="GO" id="GO:0044183">
    <property type="term" value="F:protein folding chaperone"/>
    <property type="evidence" value="ECO:0007669"/>
    <property type="project" value="InterPro"/>
</dbReference>
<dbReference type="GO" id="GO:0051087">
    <property type="term" value="F:protein-folding chaperone binding"/>
    <property type="evidence" value="ECO:0007669"/>
    <property type="project" value="TreeGrafter"/>
</dbReference>
<dbReference type="GO" id="GO:0051082">
    <property type="term" value="F:unfolded protein binding"/>
    <property type="evidence" value="ECO:0007669"/>
    <property type="project" value="TreeGrafter"/>
</dbReference>
<dbReference type="GO" id="GO:0051085">
    <property type="term" value="P:chaperone cofactor-dependent protein refolding"/>
    <property type="evidence" value="ECO:0007669"/>
    <property type="project" value="TreeGrafter"/>
</dbReference>
<dbReference type="CDD" id="cd00320">
    <property type="entry name" value="cpn10"/>
    <property type="match status" value="1"/>
</dbReference>
<dbReference type="FunFam" id="2.30.33.40:FF:000001">
    <property type="entry name" value="10 kDa chaperonin"/>
    <property type="match status" value="1"/>
</dbReference>
<dbReference type="Gene3D" id="2.30.33.40">
    <property type="entry name" value="GroES chaperonin"/>
    <property type="match status" value="1"/>
</dbReference>
<dbReference type="HAMAP" id="MF_00580">
    <property type="entry name" value="CH10"/>
    <property type="match status" value="1"/>
</dbReference>
<dbReference type="InterPro" id="IPR020818">
    <property type="entry name" value="Chaperonin_GroES"/>
</dbReference>
<dbReference type="InterPro" id="IPR037124">
    <property type="entry name" value="Chaperonin_GroES_sf"/>
</dbReference>
<dbReference type="InterPro" id="IPR018369">
    <property type="entry name" value="Chaprnonin_Cpn10_CS"/>
</dbReference>
<dbReference type="InterPro" id="IPR011032">
    <property type="entry name" value="GroES-like_sf"/>
</dbReference>
<dbReference type="NCBIfam" id="NF001527">
    <property type="entry name" value="PRK00364.1-2"/>
    <property type="match status" value="1"/>
</dbReference>
<dbReference type="NCBIfam" id="NF001529">
    <property type="entry name" value="PRK00364.1-5"/>
    <property type="match status" value="1"/>
</dbReference>
<dbReference type="NCBIfam" id="NF001531">
    <property type="entry name" value="PRK00364.2-2"/>
    <property type="match status" value="1"/>
</dbReference>
<dbReference type="NCBIfam" id="NF001533">
    <property type="entry name" value="PRK00364.2-4"/>
    <property type="match status" value="1"/>
</dbReference>
<dbReference type="NCBIfam" id="NF001534">
    <property type="entry name" value="PRK00364.2-5"/>
    <property type="match status" value="1"/>
</dbReference>
<dbReference type="PANTHER" id="PTHR10772">
    <property type="entry name" value="10 KDA HEAT SHOCK PROTEIN"/>
    <property type="match status" value="1"/>
</dbReference>
<dbReference type="PANTHER" id="PTHR10772:SF58">
    <property type="entry name" value="CO-CHAPERONIN GROES"/>
    <property type="match status" value="1"/>
</dbReference>
<dbReference type="Pfam" id="PF00166">
    <property type="entry name" value="Cpn10"/>
    <property type="match status" value="1"/>
</dbReference>
<dbReference type="PRINTS" id="PR00297">
    <property type="entry name" value="CHAPERONIN10"/>
</dbReference>
<dbReference type="SMART" id="SM00883">
    <property type="entry name" value="Cpn10"/>
    <property type="match status" value="1"/>
</dbReference>
<dbReference type="SUPFAM" id="SSF50129">
    <property type="entry name" value="GroES-like"/>
    <property type="match status" value="1"/>
</dbReference>
<dbReference type="PROSITE" id="PS00681">
    <property type="entry name" value="CHAPERONINS_CPN10"/>
    <property type="match status" value="1"/>
</dbReference>
<sequence length="96" mass="10464">MNLRPLHDRVIVKRLDNETKTASGIVIPDNAAEKPDQGEVLAIGPGKKDDKGNNIALDVKVGDRVLFGKYAGQAVKVEGQELLVMREEDIMAVVNK</sequence>
<accession>Q0KDR8</accession>
<gene>
    <name evidence="1" type="primary">groES</name>
    <name evidence="1" type="synonym">groS</name>
    <name type="ordered locus">H16_A0705</name>
</gene>
<keyword id="KW-0143">Chaperone</keyword>
<keyword id="KW-0963">Cytoplasm</keyword>
<keyword id="KW-1185">Reference proteome</keyword>
<proteinExistence type="inferred from homology"/>
<evidence type="ECO:0000255" key="1">
    <source>
        <dbReference type="HAMAP-Rule" id="MF_00580"/>
    </source>
</evidence>
<comment type="function">
    <text evidence="1">Together with the chaperonin GroEL, plays an essential role in assisting protein folding. The GroEL-GroES system forms a nano-cage that allows encapsulation of the non-native substrate proteins and provides a physical environment optimized to promote and accelerate protein folding. GroES binds to the apical surface of the GroEL ring, thereby capping the opening of the GroEL channel.</text>
</comment>
<comment type="subunit">
    <text evidence="1">Heptamer of 7 subunits arranged in a ring. Interacts with the chaperonin GroEL.</text>
</comment>
<comment type="subcellular location">
    <subcellularLocation>
        <location evidence="1">Cytoplasm</location>
    </subcellularLocation>
</comment>
<comment type="similarity">
    <text evidence="1">Belongs to the GroES chaperonin family.</text>
</comment>
<name>CH10_CUPNH</name>
<organism>
    <name type="scientific">Cupriavidus necator (strain ATCC 17699 / DSM 428 / KCTC 22496 / NCIMB 10442 / H16 / Stanier 337)</name>
    <name type="common">Ralstonia eutropha</name>
    <dbReference type="NCBI Taxonomy" id="381666"/>
    <lineage>
        <taxon>Bacteria</taxon>
        <taxon>Pseudomonadati</taxon>
        <taxon>Pseudomonadota</taxon>
        <taxon>Betaproteobacteria</taxon>
        <taxon>Burkholderiales</taxon>
        <taxon>Burkholderiaceae</taxon>
        <taxon>Cupriavidus</taxon>
    </lineage>
</organism>